<accession>Q026Q7</accession>
<comment type="function">
    <text evidence="1">Plays an important role in the de novo pathway of purine nucleotide biosynthesis. Catalyzes the first committed step in the biosynthesis of AMP from IMP.</text>
</comment>
<comment type="catalytic activity">
    <reaction evidence="1">
        <text>IMP + L-aspartate + GTP = N(6)-(1,2-dicarboxyethyl)-AMP + GDP + phosphate + 2 H(+)</text>
        <dbReference type="Rhea" id="RHEA:15753"/>
        <dbReference type="ChEBI" id="CHEBI:15378"/>
        <dbReference type="ChEBI" id="CHEBI:29991"/>
        <dbReference type="ChEBI" id="CHEBI:37565"/>
        <dbReference type="ChEBI" id="CHEBI:43474"/>
        <dbReference type="ChEBI" id="CHEBI:57567"/>
        <dbReference type="ChEBI" id="CHEBI:58053"/>
        <dbReference type="ChEBI" id="CHEBI:58189"/>
        <dbReference type="EC" id="6.3.4.4"/>
    </reaction>
</comment>
<comment type="cofactor">
    <cofactor evidence="1">
        <name>Mg(2+)</name>
        <dbReference type="ChEBI" id="CHEBI:18420"/>
    </cofactor>
    <text evidence="1">Binds 1 Mg(2+) ion per subunit.</text>
</comment>
<comment type="pathway">
    <text evidence="1">Purine metabolism; AMP biosynthesis via de novo pathway; AMP from IMP: step 1/2.</text>
</comment>
<comment type="subunit">
    <text evidence="1">Homodimer.</text>
</comment>
<comment type="subcellular location">
    <subcellularLocation>
        <location evidence="1">Cytoplasm</location>
    </subcellularLocation>
</comment>
<comment type="similarity">
    <text evidence="1">Belongs to the adenylosuccinate synthetase family.</text>
</comment>
<organism>
    <name type="scientific">Solibacter usitatus (strain Ellin6076)</name>
    <dbReference type="NCBI Taxonomy" id="234267"/>
    <lineage>
        <taxon>Bacteria</taxon>
        <taxon>Pseudomonadati</taxon>
        <taxon>Acidobacteriota</taxon>
        <taxon>Terriglobia</taxon>
        <taxon>Bryobacterales</taxon>
        <taxon>Solibacteraceae</taxon>
        <taxon>Candidatus Solibacter</taxon>
    </lineage>
</organism>
<evidence type="ECO:0000255" key="1">
    <source>
        <dbReference type="HAMAP-Rule" id="MF_00011"/>
    </source>
</evidence>
<gene>
    <name evidence="1" type="primary">purA</name>
    <name type="ordered locus">Acid_2022</name>
</gene>
<dbReference type="EC" id="6.3.4.4" evidence="1"/>
<dbReference type="EMBL" id="CP000473">
    <property type="protein sequence ID" value="ABJ83012.1"/>
    <property type="molecule type" value="Genomic_DNA"/>
</dbReference>
<dbReference type="SMR" id="Q026Q7"/>
<dbReference type="FunCoup" id="Q026Q7">
    <property type="interactions" value="668"/>
</dbReference>
<dbReference type="STRING" id="234267.Acid_2022"/>
<dbReference type="KEGG" id="sus:Acid_2022"/>
<dbReference type="eggNOG" id="COG0104">
    <property type="taxonomic scope" value="Bacteria"/>
</dbReference>
<dbReference type="HOGENOM" id="CLU_029848_0_0_0"/>
<dbReference type="InParanoid" id="Q026Q7"/>
<dbReference type="OrthoDB" id="9807553at2"/>
<dbReference type="UniPathway" id="UPA00075">
    <property type="reaction ID" value="UER00335"/>
</dbReference>
<dbReference type="GO" id="GO:0005737">
    <property type="term" value="C:cytoplasm"/>
    <property type="evidence" value="ECO:0007669"/>
    <property type="project" value="UniProtKB-SubCell"/>
</dbReference>
<dbReference type="GO" id="GO:0004019">
    <property type="term" value="F:adenylosuccinate synthase activity"/>
    <property type="evidence" value="ECO:0007669"/>
    <property type="project" value="UniProtKB-UniRule"/>
</dbReference>
<dbReference type="GO" id="GO:0005525">
    <property type="term" value="F:GTP binding"/>
    <property type="evidence" value="ECO:0007669"/>
    <property type="project" value="UniProtKB-UniRule"/>
</dbReference>
<dbReference type="GO" id="GO:0000287">
    <property type="term" value="F:magnesium ion binding"/>
    <property type="evidence" value="ECO:0007669"/>
    <property type="project" value="UniProtKB-UniRule"/>
</dbReference>
<dbReference type="GO" id="GO:0044208">
    <property type="term" value="P:'de novo' AMP biosynthetic process"/>
    <property type="evidence" value="ECO:0007669"/>
    <property type="project" value="UniProtKB-UniRule"/>
</dbReference>
<dbReference type="GO" id="GO:0046040">
    <property type="term" value="P:IMP metabolic process"/>
    <property type="evidence" value="ECO:0007669"/>
    <property type="project" value="TreeGrafter"/>
</dbReference>
<dbReference type="CDD" id="cd03108">
    <property type="entry name" value="AdSS"/>
    <property type="match status" value="1"/>
</dbReference>
<dbReference type="FunFam" id="1.10.300.10:FF:000001">
    <property type="entry name" value="Adenylosuccinate synthetase"/>
    <property type="match status" value="1"/>
</dbReference>
<dbReference type="FunFam" id="3.90.170.10:FF:000001">
    <property type="entry name" value="Adenylosuccinate synthetase"/>
    <property type="match status" value="1"/>
</dbReference>
<dbReference type="Gene3D" id="3.40.440.10">
    <property type="entry name" value="Adenylosuccinate Synthetase, subunit A, domain 1"/>
    <property type="match status" value="1"/>
</dbReference>
<dbReference type="Gene3D" id="1.10.300.10">
    <property type="entry name" value="Adenylosuccinate Synthetase, subunit A, domain 2"/>
    <property type="match status" value="1"/>
</dbReference>
<dbReference type="Gene3D" id="3.90.170.10">
    <property type="entry name" value="Adenylosuccinate Synthetase, subunit A, domain 3"/>
    <property type="match status" value="1"/>
</dbReference>
<dbReference type="HAMAP" id="MF_00011">
    <property type="entry name" value="Adenylosucc_synth"/>
    <property type="match status" value="1"/>
</dbReference>
<dbReference type="InterPro" id="IPR018220">
    <property type="entry name" value="Adenylosuccin_syn_GTP-bd"/>
</dbReference>
<dbReference type="InterPro" id="IPR033128">
    <property type="entry name" value="Adenylosuccin_syn_Lys_AS"/>
</dbReference>
<dbReference type="InterPro" id="IPR042109">
    <property type="entry name" value="Adenylosuccinate_synth_dom1"/>
</dbReference>
<dbReference type="InterPro" id="IPR042110">
    <property type="entry name" value="Adenylosuccinate_synth_dom2"/>
</dbReference>
<dbReference type="InterPro" id="IPR042111">
    <property type="entry name" value="Adenylosuccinate_synth_dom3"/>
</dbReference>
<dbReference type="InterPro" id="IPR001114">
    <property type="entry name" value="Adenylosuccinate_synthetase"/>
</dbReference>
<dbReference type="InterPro" id="IPR027417">
    <property type="entry name" value="P-loop_NTPase"/>
</dbReference>
<dbReference type="NCBIfam" id="NF002223">
    <property type="entry name" value="PRK01117.1"/>
    <property type="match status" value="1"/>
</dbReference>
<dbReference type="NCBIfam" id="TIGR00184">
    <property type="entry name" value="purA"/>
    <property type="match status" value="1"/>
</dbReference>
<dbReference type="PANTHER" id="PTHR11846">
    <property type="entry name" value="ADENYLOSUCCINATE SYNTHETASE"/>
    <property type="match status" value="1"/>
</dbReference>
<dbReference type="PANTHER" id="PTHR11846:SF0">
    <property type="entry name" value="ADENYLOSUCCINATE SYNTHETASE"/>
    <property type="match status" value="1"/>
</dbReference>
<dbReference type="Pfam" id="PF00709">
    <property type="entry name" value="Adenylsucc_synt"/>
    <property type="match status" value="1"/>
</dbReference>
<dbReference type="SMART" id="SM00788">
    <property type="entry name" value="Adenylsucc_synt"/>
    <property type="match status" value="1"/>
</dbReference>
<dbReference type="SUPFAM" id="SSF52540">
    <property type="entry name" value="P-loop containing nucleoside triphosphate hydrolases"/>
    <property type="match status" value="1"/>
</dbReference>
<dbReference type="PROSITE" id="PS01266">
    <property type="entry name" value="ADENYLOSUCCIN_SYN_1"/>
    <property type="match status" value="1"/>
</dbReference>
<dbReference type="PROSITE" id="PS00513">
    <property type="entry name" value="ADENYLOSUCCIN_SYN_2"/>
    <property type="match status" value="1"/>
</dbReference>
<keyword id="KW-0963">Cytoplasm</keyword>
<keyword id="KW-0342">GTP-binding</keyword>
<keyword id="KW-0436">Ligase</keyword>
<keyword id="KW-0460">Magnesium</keyword>
<keyword id="KW-0479">Metal-binding</keyword>
<keyword id="KW-0547">Nucleotide-binding</keyword>
<keyword id="KW-0658">Purine biosynthesis</keyword>
<reference key="1">
    <citation type="journal article" date="2009" name="Appl. Environ. Microbiol.">
        <title>Three genomes from the phylum Acidobacteria provide insight into the lifestyles of these microorganisms in soils.</title>
        <authorList>
            <person name="Ward N.L."/>
            <person name="Challacombe J.F."/>
            <person name="Janssen P.H."/>
            <person name="Henrissat B."/>
            <person name="Coutinho P.M."/>
            <person name="Wu M."/>
            <person name="Xie G."/>
            <person name="Haft D.H."/>
            <person name="Sait M."/>
            <person name="Badger J."/>
            <person name="Barabote R.D."/>
            <person name="Bradley B."/>
            <person name="Brettin T.S."/>
            <person name="Brinkac L.M."/>
            <person name="Bruce D."/>
            <person name="Creasy T."/>
            <person name="Daugherty S.C."/>
            <person name="Davidsen T.M."/>
            <person name="DeBoy R.T."/>
            <person name="Detter J.C."/>
            <person name="Dodson R.J."/>
            <person name="Durkin A.S."/>
            <person name="Ganapathy A."/>
            <person name="Gwinn-Giglio M."/>
            <person name="Han C.S."/>
            <person name="Khouri H."/>
            <person name="Kiss H."/>
            <person name="Kothari S.P."/>
            <person name="Madupu R."/>
            <person name="Nelson K.E."/>
            <person name="Nelson W.C."/>
            <person name="Paulsen I."/>
            <person name="Penn K."/>
            <person name="Ren Q."/>
            <person name="Rosovitz M.J."/>
            <person name="Selengut J.D."/>
            <person name="Shrivastava S."/>
            <person name="Sullivan S.A."/>
            <person name="Tapia R."/>
            <person name="Thompson L.S."/>
            <person name="Watkins K.L."/>
            <person name="Yang Q."/>
            <person name="Yu C."/>
            <person name="Zafar N."/>
            <person name="Zhou L."/>
            <person name="Kuske C.R."/>
        </authorList>
    </citation>
    <scope>NUCLEOTIDE SEQUENCE [LARGE SCALE GENOMIC DNA]</scope>
    <source>
        <strain>Ellin6076</strain>
    </source>
</reference>
<name>PURA_SOLUE</name>
<feature type="chain" id="PRO_1000000923" description="Adenylosuccinate synthetase">
    <location>
        <begin position="1"/>
        <end position="434"/>
    </location>
</feature>
<feature type="active site" description="Proton acceptor" evidence="1">
    <location>
        <position position="13"/>
    </location>
</feature>
<feature type="active site" description="Proton donor" evidence="1">
    <location>
        <position position="41"/>
    </location>
</feature>
<feature type="binding site" evidence="1">
    <location>
        <begin position="12"/>
        <end position="18"/>
    </location>
    <ligand>
        <name>GTP</name>
        <dbReference type="ChEBI" id="CHEBI:37565"/>
    </ligand>
</feature>
<feature type="binding site" description="in other chain" evidence="1">
    <location>
        <begin position="13"/>
        <end position="16"/>
    </location>
    <ligand>
        <name>IMP</name>
        <dbReference type="ChEBI" id="CHEBI:58053"/>
        <note>ligand shared between dimeric partners</note>
    </ligand>
</feature>
<feature type="binding site" evidence="1">
    <location>
        <position position="13"/>
    </location>
    <ligand>
        <name>Mg(2+)</name>
        <dbReference type="ChEBI" id="CHEBI:18420"/>
    </ligand>
</feature>
<feature type="binding site" description="in other chain" evidence="1">
    <location>
        <begin position="38"/>
        <end position="41"/>
    </location>
    <ligand>
        <name>IMP</name>
        <dbReference type="ChEBI" id="CHEBI:58053"/>
        <note>ligand shared between dimeric partners</note>
    </ligand>
</feature>
<feature type="binding site" evidence="1">
    <location>
        <begin position="40"/>
        <end position="42"/>
    </location>
    <ligand>
        <name>GTP</name>
        <dbReference type="ChEBI" id="CHEBI:37565"/>
    </ligand>
</feature>
<feature type="binding site" evidence="1">
    <location>
        <position position="40"/>
    </location>
    <ligand>
        <name>Mg(2+)</name>
        <dbReference type="ChEBI" id="CHEBI:18420"/>
    </ligand>
</feature>
<feature type="binding site" description="in other chain" evidence="1">
    <location>
        <position position="129"/>
    </location>
    <ligand>
        <name>IMP</name>
        <dbReference type="ChEBI" id="CHEBI:58053"/>
        <note>ligand shared between dimeric partners</note>
    </ligand>
</feature>
<feature type="binding site" evidence="1">
    <location>
        <position position="143"/>
    </location>
    <ligand>
        <name>IMP</name>
        <dbReference type="ChEBI" id="CHEBI:58053"/>
        <note>ligand shared between dimeric partners</note>
    </ligand>
</feature>
<feature type="binding site" description="in other chain" evidence="1">
    <location>
        <position position="224"/>
    </location>
    <ligand>
        <name>IMP</name>
        <dbReference type="ChEBI" id="CHEBI:58053"/>
        <note>ligand shared between dimeric partners</note>
    </ligand>
</feature>
<feature type="binding site" description="in other chain" evidence="1">
    <location>
        <position position="239"/>
    </location>
    <ligand>
        <name>IMP</name>
        <dbReference type="ChEBI" id="CHEBI:58053"/>
        <note>ligand shared between dimeric partners</note>
    </ligand>
</feature>
<feature type="binding site" evidence="1">
    <location>
        <begin position="299"/>
        <end position="305"/>
    </location>
    <ligand>
        <name>substrate</name>
    </ligand>
</feature>
<feature type="binding site" description="in other chain" evidence="1">
    <location>
        <position position="303"/>
    </location>
    <ligand>
        <name>IMP</name>
        <dbReference type="ChEBI" id="CHEBI:58053"/>
        <note>ligand shared between dimeric partners</note>
    </ligand>
</feature>
<feature type="binding site" evidence="1">
    <location>
        <position position="305"/>
    </location>
    <ligand>
        <name>GTP</name>
        <dbReference type="ChEBI" id="CHEBI:37565"/>
    </ligand>
</feature>
<feature type="binding site" evidence="1">
    <location>
        <begin position="331"/>
        <end position="333"/>
    </location>
    <ligand>
        <name>GTP</name>
        <dbReference type="ChEBI" id="CHEBI:37565"/>
    </ligand>
</feature>
<feature type="binding site" evidence="1">
    <location>
        <begin position="413"/>
        <end position="415"/>
    </location>
    <ligand>
        <name>GTP</name>
        <dbReference type="ChEBI" id="CHEBI:37565"/>
    </ligand>
</feature>
<protein>
    <recommendedName>
        <fullName evidence="1">Adenylosuccinate synthetase</fullName>
        <shortName evidence="1">AMPSase</shortName>
        <shortName evidence="1">AdSS</shortName>
        <ecNumber evidence="1">6.3.4.4</ecNumber>
    </recommendedName>
    <alternativeName>
        <fullName evidence="1">IMP--aspartate ligase</fullName>
    </alternativeName>
</protein>
<proteinExistence type="inferred from homology"/>
<sequence length="434" mass="47103">MGNVIILGSQWGDEGKGKIVDLFAERFDIVARYQGGHNAGHTVFIGEKKFVLKLIPSGILRPGKKAVIGNGLVIDPAALLSEIDTLQAAGVPVMGNLFISNRAHVLFPAHRMMEKMSEGREGRVSIGTTSRGIGPCYEDKIARRGIRIADLLDTEFFRAQYASVMEEKVLIAKALGIYSELDLRAIRDEYEAFAERIRPMVCDTSVLLNDAIRSGKTVMFEGAQGTMLDIDHGTYPFVTSSSASAGGACTGTGVAPTRISGVLGVSKAYITRVGGGPFPTEAFDGAGDRIRERGKEFGAVTGRPRRCGWFDVPLLRYTANINGFDSLVITKLDVLDEFDQIPVCVSYRIGNREVVDMPPTVAEMEKVEPVYECVPGWNTSTFGISQFGELPAKAKEYLAYLENRTGVEVGCVSTGPERNQTIVRAGSRFESLIG</sequence>